<reference key="1">
    <citation type="journal article" date="1987" name="J. Biol. Chem.">
        <title>Primary structure of soybean lipoxygenase-1.</title>
        <authorList>
            <person name="Shibata D."/>
            <person name="Steczko J."/>
            <person name="Dixon J.E."/>
            <person name="Hermodson M."/>
            <person name="Yazdanparast R."/>
            <person name="Axelrod B."/>
        </authorList>
    </citation>
    <scope>NUCLEOTIDE SEQUENCE [MRNA]</scope>
    <scope>PARTIAL PROTEIN SEQUENCE</scope>
</reference>
<reference key="2">
    <citation type="submission" date="1992-06" db="EMBL/GenBank/DDBJ databases">
        <authorList>
            <person name="Fukazawa C."/>
            <person name="Masayoshi M."/>
            <person name="Chikafusa F."/>
        </authorList>
    </citation>
    <scope>NUCLEOTIDE SEQUENCE [MRNA]</scope>
    <source>
        <strain>cv. Bonminori</strain>
        <tissue>Cotyledon</tissue>
    </source>
</reference>
<reference key="3">
    <citation type="journal article" date="1986" name="Plant Mol. Biol.">
        <title>Two soybean seed lipoxygenase nulls accumulate reduced levels of lipoxygenase transcripts.</title>
        <authorList>
            <person name="Start W.G."/>
            <person name="Ma Y."/>
            <person name="Polacco J.C."/>
            <person name="Hildebrand D.F."/>
            <person name="Freyer G.A."/>
            <person name="Altschuler M."/>
        </authorList>
        <dbReference type="AGRICOLA" id="IND87003970"/>
    </citation>
    <scope>NUCLEOTIDE SEQUENCE [MRNA] OF 426-752</scope>
</reference>
<reference key="4">
    <citation type="journal article" date="1992" name="Biochemistry">
        <title>Conserved histidine residues in soybean lipoxygenase: functional consequences of their replacement.</title>
        <authorList>
            <person name="Steczko J."/>
            <person name="Donoho G.P."/>
            <person name="Clemens J.C."/>
            <person name="Dixon J.E."/>
            <person name="Axelrod B."/>
        </authorList>
    </citation>
    <scope>SEQUENCE REVISION TO 479-482</scope>
    <scope>MUTAGENESIS OF SOME HISTIDINE RESIDUES</scope>
</reference>
<reference key="5">
    <citation type="journal article" date="1989" name="Biochim. Biophys. Acta">
        <title>Soybean lipoxygenase-1 enzymically forms both (9S)- and (13S)-hydroperoxides from linoleic acid by a pH-dependent mechanism.</title>
        <authorList>
            <person name="Gardner H.W."/>
        </authorList>
    </citation>
    <scope>CATALYTIC ACTIVITY</scope>
    <scope>BIOPHYSICOCHEMICAL PROPERTIES</scope>
    <scope>SPECIFICITY</scope>
</reference>
<reference key="6">
    <citation type="journal article" date="1992" name="Biochem. Biophys. Res. Commun.">
        <title>Identification of the iron-binding histidine residues in soybean lipoxygenase L-1.</title>
        <authorList>
            <person name="Steczko J."/>
            <person name="Axelrod B."/>
        </authorList>
    </citation>
    <scope>MUTAGENESIS OF SOME HISTIDINE RESIDUES</scope>
</reference>
<reference key="7">
    <citation type="journal article" date="1993" name="Biochemistry">
        <title>Crystallographic determination of the active site iron and its ligands in soybean lipoxygenase L-1.</title>
        <authorList>
            <person name="Minor W."/>
            <person name="Steczko J."/>
            <person name="Bolin J.T."/>
            <person name="Otwinowski Z."/>
            <person name="Axelrod B."/>
        </authorList>
    </citation>
    <scope>COFACTOR</scope>
</reference>
<reference key="8">
    <citation type="journal article" date="2005" name="J. Biol. Chem.">
        <title>On the relationships of substrate orientation, hydrogen abstraction, and product stereochemistry in single and double dioxygenations by soybean lipoxygenase-1 and its Ala542Gly mutant.</title>
        <authorList>
            <person name="Coffa G."/>
            <person name="Imber A.N."/>
            <person name="Maguire B.C."/>
            <person name="Laxmikanthan G."/>
            <person name="Schneider C."/>
            <person name="Gaffney B.J."/>
            <person name="Brash A.R."/>
        </authorList>
    </citation>
    <scope>CATALYTIC ACTIVITY</scope>
    <scope>FUNCTION</scope>
    <scope>MUTAGENESIS OF ALA-542</scope>
    <scope>ENZYME KINETICS</scope>
    <scope>REACTION MECHANISM</scope>
    <scope>EPR SPECTROSCOPY</scope>
</reference>
<reference key="9">
    <citation type="journal article" date="2009" name="J. Biol. Chem.">
        <title>Biogenic synthesis, purification, and chemical characterization of anti-inflammatory resolvins derived from docosapentaenoic acid (DPAn-6).</title>
        <authorList>
            <person name="Dangi B."/>
            <person name="Obeng M."/>
            <person name="Nauroth J.M."/>
            <person name="Teymourlouei M."/>
            <person name="Needham M."/>
            <person name="Raman K."/>
            <person name="Arterburn L.M."/>
        </authorList>
    </citation>
    <scope>CATALYTIC ACTIVITY</scope>
</reference>
<reference key="10">
    <citation type="journal article" date="1993" name="Science">
        <title>The three-dimensional structure of an arachidonic acid 15-lipoxygenase.</title>
        <authorList>
            <person name="Boyington J.C."/>
            <person name="Gaffney B.J."/>
            <person name="Amzel L.M."/>
        </authorList>
    </citation>
    <scope>X-RAY CRYSTALLOGRAPHY (2.6 ANGSTROMS) IN COMPLEX WITH IRON IONS</scope>
</reference>
<reference key="11">
    <citation type="journal article" date="1996" name="Biochemistry">
        <title>Crystal structure of soybean lipoxygenase L-1 at 1.4-A resolution.</title>
        <authorList>
            <person name="Minor W."/>
            <person name="Steczko J."/>
            <person name="Stec B."/>
            <person name="Otwinowski Z."/>
            <person name="Bolin J.T."/>
            <person name="Walter R."/>
            <person name="Axelrod B."/>
        </authorList>
    </citation>
    <scope>X-RAY CRYSTALLOGRAPHY (1.4 ANGSTROMS) IN COMPLEX WITH IRON IONS</scope>
</reference>
<reference key="12">
    <citation type="journal article" date="2001" name="Biochemistry">
        <title>Structural and functional characterization of second-coordination sphere mutants of soybean lipoxygenase-1.</title>
        <authorList>
            <person name="Tomchick D.R."/>
            <person name="Phan P."/>
            <person name="Cymborowski M."/>
            <person name="Minor W."/>
            <person name="Holman T.R."/>
        </authorList>
    </citation>
    <scope>X-RAY CRYSTALLOGRAPHY (1.4 ANGSTROMS) OF WILD-TYPE AND MUTANTS GLN-495 AND GLN-697 IN COMPLEX WITH IRON IONS</scope>
    <scope>MUTAGENESIS OF GLN-495 AND GLN-697</scope>
</reference>
<reference key="13">
    <citation type="journal article" date="2006" name="Biochemistry">
        <title>Kinetic, spectroscopic, and structural investigations of the soybean lipoxygenase-1 first-coordination sphere mutant, Asn694Gly.</title>
        <authorList>
            <person name="Segraves E.N."/>
            <person name="Chruszcz M."/>
            <person name="Neidig M.L."/>
            <person name="Ruddat V."/>
            <person name="Zhou J."/>
            <person name="Wecksler A.T."/>
            <person name="Minor W."/>
            <person name="Solomon E.I."/>
            <person name="Holman T.R."/>
        </authorList>
    </citation>
    <scope>X-RAY CRYSTALLOGRAPHY (1.95 ANGSTROMS) IN COMPLEX WITH IRON IONS</scope>
    <scope>MUTAGENESIS OF ASN-694</scope>
</reference>
<reference key="14">
    <citation type="journal article" date="2008" name="Biophys. J.">
        <title>Determination of protein structures--a series of fortunate events.</title>
        <authorList>
            <person name="Chruszcz M."/>
            <person name="Wlodawer A."/>
            <person name="Minor W."/>
        </authorList>
    </citation>
    <scope>X-RAY CRYSTALLOGRAPHY (1.40 ANGSTROMS) IN COMPLEX WITH IRON IONS</scope>
</reference>
<reference key="15">
    <citation type="journal article" date="2008" name="Proc. Natl. Acad. Sci. U.S.A.">
        <title>Enzyme structure and dynamics affect hydrogen tunneling: the impact of a remote side chain (I553) in soybean lipoxygenase-1.</title>
        <authorList>
            <person name="Meyer M.P."/>
            <person name="Tomchick D.R."/>
            <person name="Klinman J.P."/>
        </authorList>
    </citation>
    <scope>X-RAY CRYSTALLOGRAPHY (1.40 ANGSTROMS) IN COMPLEX WITH IRON IONS</scope>
    <scope>MUTAGENESIS OF ILE-553</scope>
</reference>
<reference key="16">
    <citation type="journal article" date="2014" name="J. Am. Chem. Soc.">
        <title>Extremely elevated room-temperature kinetic isotope effects quantify the critical role of barrier width in enzymatic C-H activation.</title>
        <authorList>
            <person name="Hu S."/>
            <person name="Sharma S.C."/>
            <person name="Scouras A.D."/>
            <person name="Soudackov A.V."/>
            <person name="Carr C.A."/>
            <person name="Hammes-Schiffer S."/>
            <person name="Alber T."/>
            <person name="Klinman J.P."/>
        </authorList>
    </citation>
    <scope>X-RAY CRYSTALLOGRAPHY (1.70 ANGSTROMS) IN COMPLEX WITH IRON IONS</scope>
    <scope>MUTAGENESIS OF LEU-546 AND LEU-754</scope>
</reference>
<reference key="17">
    <citation type="journal article" date="2017" name="ACS Cent. Sci.">
        <title>Hydrogen-deuterium exchange of lipoxygenase uncovers a relationship between distal, solvent exposed protein motions and the thermal activation barrier for catalytic proton-coupled electron tunneling.</title>
        <authorList>
            <person name="Offenbacher A.R."/>
            <person name="Hu S."/>
            <person name="Poss E.M."/>
            <person name="Carr C.A.M."/>
            <person name="Scouras A.D."/>
            <person name="Prigozhin D.M."/>
            <person name="Iavarone A.T."/>
            <person name="Palla A."/>
            <person name="Alber T."/>
            <person name="Fraser J.S."/>
            <person name="Klinman J.P."/>
        </authorList>
    </citation>
    <scope>X-RAY CRYSTALLOGRAPHY (1.70 ANGSTROMS)</scope>
</reference>
<feature type="chain" id="PRO_0000220717" description="Seed linoleate 13S-lipoxygenase-1">
    <location>
        <begin position="1"/>
        <end position="839"/>
    </location>
</feature>
<feature type="domain" description="PLAT" evidence="1">
    <location>
        <begin position="16"/>
        <end position="145"/>
    </location>
</feature>
<feature type="domain" description="Lipoxygenase" evidence="2">
    <location>
        <begin position="148"/>
        <end position="839"/>
    </location>
</feature>
<feature type="region of interest" description="Disordered" evidence="3">
    <location>
        <begin position="212"/>
        <end position="234"/>
    </location>
</feature>
<feature type="binding site" evidence="2 11 15">
    <location>
        <position position="499"/>
    </location>
    <ligand>
        <name>Fe cation</name>
        <dbReference type="ChEBI" id="CHEBI:24875"/>
        <note>catalytic</note>
    </ligand>
</feature>
<feature type="binding site" evidence="2 11 15">
    <location>
        <position position="504"/>
    </location>
    <ligand>
        <name>Fe cation</name>
        <dbReference type="ChEBI" id="CHEBI:24875"/>
        <note>catalytic</note>
    </ligand>
</feature>
<feature type="binding site" evidence="2 11 15">
    <location>
        <position position="690"/>
    </location>
    <ligand>
        <name>Fe cation</name>
        <dbReference type="ChEBI" id="CHEBI:24875"/>
        <note>catalytic</note>
    </ligand>
</feature>
<feature type="binding site" evidence="2 11 15">
    <location>
        <position position="694"/>
    </location>
    <ligand>
        <name>Fe cation</name>
        <dbReference type="ChEBI" id="CHEBI:24875"/>
        <note>catalytic</note>
    </ligand>
</feature>
<feature type="binding site" evidence="11 15">
    <location>
        <position position="839"/>
    </location>
    <ligand>
        <name>Fe cation</name>
        <dbReference type="ChEBI" id="CHEBI:24875"/>
        <note>catalytic</note>
    </ligand>
</feature>
<feature type="mutagenesis site" description="37% of wild-type activity.">
    <original>H</original>
    <variation>Q</variation>
    <location>
        <position position="494"/>
    </location>
</feature>
<feature type="mutagenesis site" description="8% of wild-type activity.">
    <original>H</original>
    <variation>S</variation>
    <location>
        <position position="494"/>
    </location>
</feature>
<feature type="mutagenesis site" description="Reduces catalytic activity." evidence="4">
    <original>Q</original>
    <variation>A</variation>
    <location>
        <position position="495"/>
    </location>
</feature>
<feature type="mutagenesis site" description="No effect on catalytic activity." evidence="4">
    <original>Q</original>
    <variation>E</variation>
    <location>
        <position position="495"/>
    </location>
</feature>
<feature type="mutagenesis site" description="Inactive.">
    <original>H</original>
    <variation>Q</variation>
    <location>
        <position position="499"/>
    </location>
</feature>
<feature type="mutagenesis site" description="Inactive.">
    <original>H</original>
    <variation>Q</variation>
    <variation>S</variation>
    <location>
        <position position="504"/>
    </location>
</feature>
<feature type="mutagenesis site" description="33% of wild-type activity.">
    <original>H</original>
    <variation>Q</variation>
    <location>
        <position position="517"/>
    </location>
</feature>
<feature type="mutagenesis site" description="1% of wild-type activity.">
    <original>H</original>
    <variation>Q</variation>
    <location>
        <position position="522"/>
    </location>
</feature>
<feature type="mutagenesis site" description="20% of wild-type activity.">
    <original>H</original>
    <variation>Q</variation>
    <location>
        <position position="531"/>
    </location>
</feature>
<feature type="mutagenesis site" description="Changes reaction profile to produce almost equal amounts of 13S- and 9R-hydroperoxyoctadecadienoate." evidence="5">
    <original>A</original>
    <variation>G</variation>
    <location>
        <position position="542"/>
    </location>
</feature>
<feature type="mutagenesis site" description="Little effect on reaction profile." evidence="5">
    <original>A</original>
    <variation>S</variation>
    <location>
        <position position="542"/>
    </location>
</feature>
<feature type="mutagenesis site" description="Complete loss of activity." evidence="5">
    <original>A</original>
    <variation>T</variation>
    <variation>V</variation>
    <location>
        <position position="542"/>
    </location>
</feature>
<feature type="mutagenesis site" description="Reduces catalytic efficiency more than 14000-fold; when associated with A-754." evidence="9">
    <original>L</original>
    <variation>A</variation>
    <location>
        <position position="546"/>
    </location>
</feature>
<feature type="mutagenesis site" description="Reduces catalytic efficiency 230-fold." evidence="7">
    <original>I</original>
    <variation>G</variation>
    <location>
        <position position="553"/>
    </location>
</feature>
<feature type="mutagenesis site" description="Inactive.">
    <original>H</original>
    <variation>Q</variation>
    <location>
        <position position="690"/>
    </location>
</feature>
<feature type="mutagenesis site" description="Reduces catalytic efficiency 5-fold." evidence="6">
    <original>N</original>
    <variation>G</variation>
    <location>
        <position position="694"/>
    </location>
</feature>
<feature type="mutagenesis site" description="Reduces catalytic activity." evidence="4">
    <original>Q</original>
    <variation>N</variation>
    <variation>E</variation>
    <location>
        <position position="697"/>
    </location>
</feature>
<feature type="mutagenesis site" description="Reduces catalytic efficiency more than 14000-fold; when associated with A-546." evidence="9">
    <original>L</original>
    <variation>A</variation>
    <location>
        <position position="754"/>
    </location>
</feature>
<feature type="sequence conflict" description="In Ref. 3." evidence="14" ref="3">
    <original>AK</original>
    <variation>RN</variation>
    <location>
        <begin position="426"/>
        <end position="427"/>
    </location>
</feature>
<feature type="sequence conflict" description="In Ref. 3." evidence="14" ref="3">
    <original>LPS</original>
    <variation>AL</variation>
    <location>
        <begin position="558"/>
        <end position="560"/>
    </location>
</feature>
<feature type="sequence conflict" description="In Ref. 3." evidence="14" ref="3">
    <original>KNW</original>
    <variation>EL</variation>
    <location>
        <begin position="572"/>
        <end position="574"/>
    </location>
</feature>
<feature type="sequence conflict" description="In Ref. 3." evidence="14" ref="3">
    <original>N</original>
    <variation>P</variation>
    <location>
        <position position="641"/>
    </location>
</feature>
<feature type="sequence conflict" description="In Ref. 3." evidence="14" ref="3">
    <original>KLPTLISL</original>
    <variation>SCRLSLAV</variation>
    <location>
        <begin position="741"/>
        <end position="748"/>
    </location>
</feature>
<feature type="strand" evidence="18">
    <location>
        <begin position="7"/>
        <end position="16"/>
    </location>
</feature>
<feature type="helix" evidence="18">
    <location>
        <begin position="17"/>
        <end position="19"/>
    </location>
</feature>
<feature type="helix" evidence="17">
    <location>
        <begin position="24"/>
        <end position="26"/>
    </location>
</feature>
<feature type="helix" evidence="18">
    <location>
        <begin position="32"/>
        <end position="35"/>
    </location>
</feature>
<feature type="strand" evidence="18">
    <location>
        <begin position="39"/>
        <end position="50"/>
    </location>
</feature>
<feature type="strand" evidence="18">
    <location>
        <begin position="56"/>
        <end position="58"/>
    </location>
</feature>
<feature type="strand" evidence="18">
    <location>
        <begin position="66"/>
        <end position="68"/>
    </location>
</feature>
<feature type="strand" evidence="18">
    <location>
        <begin position="79"/>
        <end position="86"/>
    </location>
</feature>
<feature type="helix" evidence="18">
    <location>
        <begin position="89"/>
        <end position="91"/>
    </location>
</feature>
<feature type="strand" evidence="18">
    <location>
        <begin position="94"/>
        <end position="101"/>
    </location>
</feature>
<feature type="strand" evidence="18">
    <location>
        <begin position="103"/>
        <end position="105"/>
    </location>
</feature>
<feature type="strand" evidence="18">
    <location>
        <begin position="107"/>
        <end position="114"/>
    </location>
</feature>
<feature type="helix" evidence="18">
    <location>
        <begin position="119"/>
        <end position="121"/>
    </location>
</feature>
<feature type="strand" evidence="18">
    <location>
        <begin position="123"/>
        <end position="131"/>
    </location>
</feature>
<feature type="helix" evidence="18">
    <location>
        <begin position="134"/>
        <end position="136"/>
    </location>
</feature>
<feature type="strand" evidence="18">
    <location>
        <begin position="141"/>
        <end position="144"/>
    </location>
</feature>
<feature type="helix" evidence="18">
    <location>
        <begin position="151"/>
        <end position="153"/>
    </location>
</feature>
<feature type="helix" evidence="18">
    <location>
        <begin position="156"/>
        <end position="158"/>
    </location>
</feature>
<feature type="helix" evidence="18">
    <location>
        <begin position="159"/>
        <end position="170"/>
    </location>
</feature>
<feature type="turn" evidence="18">
    <location>
        <begin position="195"/>
        <end position="197"/>
    </location>
</feature>
<feature type="helix" evidence="18">
    <location>
        <begin position="199"/>
        <end position="201"/>
    </location>
</feature>
<feature type="strand" evidence="18">
    <location>
        <begin position="206"/>
        <end position="212"/>
    </location>
</feature>
<feature type="helix" evidence="18">
    <location>
        <begin position="242"/>
        <end position="244"/>
    </location>
</feature>
<feature type="helix" evidence="18">
    <location>
        <begin position="251"/>
        <end position="253"/>
    </location>
</feature>
<feature type="helix" evidence="18">
    <location>
        <begin position="255"/>
        <end position="257"/>
    </location>
</feature>
<feature type="helix" evidence="18">
    <location>
        <begin position="258"/>
        <end position="264"/>
    </location>
</feature>
<feature type="helix" evidence="18">
    <location>
        <begin position="266"/>
        <end position="275"/>
    </location>
</feature>
<feature type="helix" evidence="18">
    <location>
        <begin position="286"/>
        <end position="290"/>
    </location>
</feature>
<feature type="helix" evidence="18">
    <location>
        <begin position="291"/>
        <end position="293"/>
    </location>
</feature>
<feature type="helix" evidence="18">
    <location>
        <begin position="301"/>
        <end position="307"/>
    </location>
</feature>
<feature type="helix" evidence="18">
    <location>
        <begin position="313"/>
        <end position="316"/>
    </location>
</feature>
<feature type="strand" evidence="16">
    <location>
        <begin position="317"/>
        <end position="319"/>
    </location>
</feature>
<feature type="strand" evidence="18">
    <location>
        <begin position="321"/>
        <end position="326"/>
    </location>
</feature>
<feature type="helix" evidence="18">
    <location>
        <begin position="331"/>
        <end position="333"/>
    </location>
</feature>
<feature type="helix" evidence="18">
    <location>
        <begin position="339"/>
        <end position="341"/>
    </location>
</feature>
<feature type="helix" evidence="18">
    <location>
        <begin position="343"/>
        <end position="352"/>
    </location>
</feature>
<feature type="strand" evidence="18">
    <location>
        <begin position="353"/>
        <end position="355"/>
    </location>
</feature>
<feature type="strand" evidence="18">
    <location>
        <begin position="364"/>
        <end position="366"/>
    </location>
</feature>
<feature type="helix" evidence="18">
    <location>
        <begin position="373"/>
        <end position="376"/>
    </location>
</feature>
<feature type="helix" evidence="18">
    <location>
        <begin position="385"/>
        <end position="387"/>
    </location>
</feature>
<feature type="helix" evidence="18">
    <location>
        <begin position="395"/>
        <end position="400"/>
    </location>
</feature>
<feature type="strand" evidence="18">
    <location>
        <begin position="404"/>
        <end position="408"/>
    </location>
</feature>
<feature type="helix" evidence="18">
    <location>
        <begin position="410"/>
        <end position="421"/>
    </location>
</feature>
<feature type="strand" evidence="18">
    <location>
        <begin position="430"/>
        <end position="437"/>
    </location>
</feature>
<feature type="strand" evidence="18">
    <location>
        <begin position="443"/>
        <end position="451"/>
    </location>
</feature>
<feature type="strand" evidence="18">
    <location>
        <begin position="456"/>
        <end position="458"/>
    </location>
</feature>
<feature type="strand" evidence="18">
    <location>
        <begin position="465"/>
        <end position="467"/>
    </location>
</feature>
<feature type="helix" evidence="18">
    <location>
        <begin position="473"/>
        <end position="496"/>
    </location>
</feature>
<feature type="helix" evidence="18">
    <location>
        <begin position="497"/>
        <end position="503"/>
    </location>
</feature>
<feature type="helix" evidence="18">
    <location>
        <begin position="504"/>
        <end position="517"/>
    </location>
</feature>
<feature type="helix" evidence="18">
    <location>
        <begin position="523"/>
        <end position="528"/>
    </location>
</feature>
<feature type="helix" evidence="18">
    <location>
        <begin position="529"/>
        <end position="532"/>
    </location>
</feature>
<feature type="helix" evidence="18">
    <location>
        <begin position="535"/>
        <end position="545"/>
    </location>
</feature>
<feature type="helix" evidence="18">
    <location>
        <begin position="552"/>
        <end position="556"/>
    </location>
</feature>
<feature type="helix" evidence="18">
    <location>
        <begin position="560"/>
        <end position="562"/>
    </location>
</feature>
<feature type="helix" evidence="18">
    <location>
        <begin position="563"/>
        <end position="571"/>
    </location>
</feature>
<feature type="helix" evidence="18">
    <location>
        <begin position="576"/>
        <end position="579"/>
    </location>
</feature>
<feature type="helix" evidence="18">
    <location>
        <begin position="581"/>
        <end position="587"/>
    </location>
</feature>
<feature type="strand" evidence="18">
    <location>
        <begin position="590"/>
        <end position="593"/>
    </location>
</feature>
<feature type="strand" evidence="18">
    <location>
        <begin position="600"/>
        <end position="605"/>
    </location>
</feature>
<feature type="helix" evidence="18">
    <location>
        <begin position="609"/>
        <end position="628"/>
    </location>
</feature>
<feature type="helix" evidence="18">
    <location>
        <begin position="629"/>
        <end position="631"/>
    </location>
</feature>
<feature type="helix" evidence="18">
    <location>
        <begin position="636"/>
        <end position="640"/>
    </location>
</feature>
<feature type="helix" evidence="18">
    <location>
        <begin position="643"/>
        <end position="654"/>
    </location>
</feature>
<feature type="turn" evidence="18">
    <location>
        <begin position="655"/>
        <end position="657"/>
    </location>
</feature>
<feature type="helix" evidence="18">
    <location>
        <begin position="658"/>
        <end position="660"/>
    </location>
</feature>
<feature type="strand" evidence="17">
    <location>
        <begin position="669"/>
        <end position="671"/>
    </location>
</feature>
<feature type="helix" evidence="18">
    <location>
        <begin position="672"/>
        <end position="686"/>
    </location>
</feature>
<feature type="helix" evidence="18">
    <location>
        <begin position="688"/>
        <end position="694"/>
    </location>
</feature>
<feature type="helix" evidence="18">
    <location>
        <begin position="697"/>
        <end position="701"/>
    </location>
</feature>
<feature type="turn" evidence="18">
    <location>
        <begin position="704"/>
        <end position="706"/>
    </location>
</feature>
<feature type="strand" evidence="19">
    <location>
        <begin position="718"/>
        <end position="720"/>
    </location>
</feature>
<feature type="helix" evidence="18">
    <location>
        <begin position="721"/>
        <end position="728"/>
    </location>
</feature>
<feature type="helix" evidence="18">
    <location>
        <begin position="730"/>
        <end position="737"/>
    </location>
</feature>
<feature type="helix" evidence="18">
    <location>
        <begin position="741"/>
        <end position="754"/>
    </location>
</feature>
<feature type="helix" evidence="18">
    <location>
        <begin position="776"/>
        <end position="801"/>
    </location>
</feature>
<feature type="helix" evidence="18">
    <location>
        <begin position="803"/>
        <end position="805"/>
    </location>
</feature>
<feature type="helix" evidence="18">
    <location>
        <begin position="806"/>
        <end position="809"/>
    </location>
</feature>
<feature type="turn" evidence="18">
    <location>
        <begin position="810"/>
        <end position="814"/>
    </location>
</feature>
<feature type="strand" evidence="18">
    <location>
        <begin position="826"/>
        <end position="828"/>
    </location>
</feature>
<feature type="strand" evidence="18">
    <location>
        <begin position="834"/>
        <end position="836"/>
    </location>
</feature>
<sequence>MFSAGHKIKGTVVLMPKNELEVNPDGSAVDNLNAFLGRSVSLQLISATKADAHGKGKVGKDTFLEGINTSLPTLGAGESAFNIHFEWDGSMGIPGAFYIKNYMQVEFFLKSLTLEAISNQGTIRFVCNSWVYNTKLYKSVRIFFANHTYVPSETPAPLVSYREEELKSLRGNGTGERKEYDRIYDYDVYNDLGNPDKSEKLARPVLGGSSTFPYPRRGRTGRGPTVTDPNTEKQGEVFYVPRDENLGHLKSKDALEIGTKSLSQIVQPAFESAFDLKSTPIEFHSFQDVHDLYEGGIKLPRDVISTIIPLPVIKELYRTDGQHILKFPQPHVVQVSQSAWMTDEEFAREMIAGVNPCVIRGLEEFPPKSNLDPAIYGDQSSKITADSLDLDGYTMDEALGSRRLFMLDYHDIFMPYVRQINQLNSAKTYATRTILFLREDGTLKPVAIELSLPHSAGDLSAAVSQVVLPAKEGVESTIWLLAKAYVIVNDSCYHQLMSHWLNTHAAMEPFVIATHRHLSVLHPIYKLLTPHYRNNMNINALARQSLINANGIIETTFLPSKYSVEMSSAVYKNWVFTDQALPADLIKRGVAIKDPSTPHGVRLLIEDYPYAADGLEIWAAIKTWVQEYVPLYYARDDDVKNDSELQHWWKEAVEKGHGDLKDKPWWPKLQTLEDLVEVCLIIIWIASALHAAVNFGQYPYGGLIMNRPTASRRLLPEKGTPEYEEMINNHEKAYLRTITSKLPTLISLSVIEILSTHASDEVYLGQRDNPHWTSDSKALQAFQKFGNKLKEIEEKLVRRNNDPSLQGNRLGPVQLPYTLLYPSSEEGLTFRGIPNSISI</sequence>
<evidence type="ECO:0000255" key="1">
    <source>
        <dbReference type="PROSITE-ProRule" id="PRU00152"/>
    </source>
</evidence>
<evidence type="ECO:0000255" key="2">
    <source>
        <dbReference type="PROSITE-ProRule" id="PRU00726"/>
    </source>
</evidence>
<evidence type="ECO:0000256" key="3">
    <source>
        <dbReference type="SAM" id="MobiDB-lite"/>
    </source>
</evidence>
<evidence type="ECO:0000269" key="4">
    <source>
    </source>
</evidence>
<evidence type="ECO:0000269" key="5">
    <source>
    </source>
</evidence>
<evidence type="ECO:0000269" key="6">
    <source>
    </source>
</evidence>
<evidence type="ECO:0000269" key="7">
    <source>
    </source>
</evidence>
<evidence type="ECO:0000269" key="8">
    <source>
    </source>
</evidence>
<evidence type="ECO:0000269" key="9">
    <source>
    </source>
</evidence>
<evidence type="ECO:0000269" key="10">
    <source>
    </source>
</evidence>
<evidence type="ECO:0000269" key="11">
    <source>
    </source>
</evidence>
<evidence type="ECO:0000269" key="12">
    <source>
    </source>
</evidence>
<evidence type="ECO:0000269" key="13">
    <source>
    </source>
</evidence>
<evidence type="ECO:0000305" key="14"/>
<evidence type="ECO:0007744" key="15">
    <source>
        <dbReference type="PDB" id="2SBL"/>
    </source>
</evidence>
<evidence type="ECO:0007829" key="16">
    <source>
        <dbReference type="PDB" id="1Y4K"/>
    </source>
</evidence>
<evidence type="ECO:0007829" key="17">
    <source>
        <dbReference type="PDB" id="1YGE"/>
    </source>
</evidence>
<evidence type="ECO:0007829" key="18">
    <source>
        <dbReference type="PDB" id="4WFO"/>
    </source>
</evidence>
<evidence type="ECO:0007829" key="19">
    <source>
        <dbReference type="PDB" id="5TR0"/>
    </source>
</evidence>
<gene>
    <name type="primary">LOX1.1</name>
    <name type="synonym">LOX1</name>
</gene>
<dbReference type="EC" id="1.13.11.12" evidence="5 10"/>
<dbReference type="EMBL" id="J02795">
    <property type="protein sequence ID" value="AAA33986.1"/>
    <property type="molecule type" value="mRNA"/>
</dbReference>
<dbReference type="EMBL" id="X67304">
    <property type="protein sequence ID" value="CAA47717.1"/>
    <property type="status" value="ALT_FRAME"/>
    <property type="molecule type" value="mRNA"/>
</dbReference>
<dbReference type="PIR" id="S25064">
    <property type="entry name" value="DASYL2"/>
</dbReference>
<dbReference type="RefSeq" id="NP_001236153.1">
    <property type="nucleotide sequence ID" value="NM_001249224.1"/>
</dbReference>
<dbReference type="PDB" id="1F8N">
    <property type="method" value="X-ray"/>
    <property type="resolution" value="1.40 A"/>
    <property type="chains" value="A=1-839"/>
</dbReference>
<dbReference type="PDB" id="1FGM">
    <property type="method" value="X-ray"/>
    <property type="resolution" value="1.90 A"/>
    <property type="chains" value="A=1-839"/>
</dbReference>
<dbReference type="PDB" id="1FGO">
    <property type="method" value="X-ray"/>
    <property type="resolution" value="1.62 A"/>
    <property type="chains" value="A=1-839"/>
</dbReference>
<dbReference type="PDB" id="1FGQ">
    <property type="method" value="X-ray"/>
    <property type="resolution" value="1.85 A"/>
    <property type="chains" value="A=1-839"/>
</dbReference>
<dbReference type="PDB" id="1FGR">
    <property type="method" value="X-ray"/>
    <property type="resolution" value="1.60 A"/>
    <property type="chains" value="A=1-839"/>
</dbReference>
<dbReference type="PDB" id="1FGT">
    <property type="method" value="X-ray"/>
    <property type="resolution" value="1.62 A"/>
    <property type="chains" value="A=1-839"/>
</dbReference>
<dbReference type="PDB" id="1Y4K">
    <property type="method" value="X-ray"/>
    <property type="resolution" value="1.95 A"/>
    <property type="chains" value="A=1-839"/>
</dbReference>
<dbReference type="PDB" id="1YGE">
    <property type="method" value="X-ray"/>
    <property type="resolution" value="1.40 A"/>
    <property type="chains" value="A=1-839"/>
</dbReference>
<dbReference type="PDB" id="2SBL">
    <property type="method" value="X-ray"/>
    <property type="resolution" value="2.60 A"/>
    <property type="chains" value="A/B=1-839"/>
</dbReference>
<dbReference type="PDB" id="3BNB">
    <property type="method" value="X-ray"/>
    <property type="resolution" value="1.45 A"/>
    <property type="chains" value="A=1-839"/>
</dbReference>
<dbReference type="PDB" id="3BNC">
    <property type="method" value="X-ray"/>
    <property type="resolution" value="1.65 A"/>
    <property type="chains" value="A=1-839"/>
</dbReference>
<dbReference type="PDB" id="3BND">
    <property type="method" value="X-ray"/>
    <property type="resolution" value="1.60 A"/>
    <property type="chains" value="A=1-839"/>
</dbReference>
<dbReference type="PDB" id="3BNE">
    <property type="method" value="X-ray"/>
    <property type="resolution" value="1.40 A"/>
    <property type="chains" value="A=1-839"/>
</dbReference>
<dbReference type="PDB" id="3PZW">
    <property type="method" value="X-ray"/>
    <property type="resolution" value="1.40 A"/>
    <property type="chains" value="A=1-839"/>
</dbReference>
<dbReference type="PDB" id="4WFO">
    <property type="method" value="X-ray"/>
    <property type="resolution" value="1.14 A"/>
    <property type="chains" value="A=1-839"/>
</dbReference>
<dbReference type="PDB" id="4WHA">
    <property type="method" value="X-ray"/>
    <property type="resolution" value="1.70 A"/>
    <property type="chains" value="A=1-839"/>
</dbReference>
<dbReference type="PDB" id="5EEO">
    <property type="method" value="X-ray"/>
    <property type="resolution" value="2.10 A"/>
    <property type="chains" value="A=1-839"/>
</dbReference>
<dbReference type="PDB" id="5T5V">
    <property type="method" value="X-ray"/>
    <property type="resolution" value="1.80 A"/>
    <property type="chains" value="A/B=1-839"/>
</dbReference>
<dbReference type="PDB" id="5TQN">
    <property type="method" value="X-ray"/>
    <property type="resolution" value="1.80 A"/>
    <property type="chains" value="A/B=1-839"/>
</dbReference>
<dbReference type="PDB" id="5TQO">
    <property type="method" value="X-ray"/>
    <property type="resolution" value="1.70 A"/>
    <property type="chains" value="A/B=1-839"/>
</dbReference>
<dbReference type="PDB" id="5TQP">
    <property type="method" value="X-ray"/>
    <property type="resolution" value="1.70 A"/>
    <property type="chains" value="A/B=1-839"/>
</dbReference>
<dbReference type="PDB" id="5TR0">
    <property type="method" value="X-ray"/>
    <property type="resolution" value="1.85 A"/>
    <property type="chains" value="A/B=1-839"/>
</dbReference>
<dbReference type="PDB" id="7SOI">
    <property type="method" value="X-ray"/>
    <property type="resolution" value="2.00 A"/>
    <property type="chains" value="A/B=1-839"/>
</dbReference>
<dbReference type="PDB" id="7SOJ">
    <property type="method" value="X-ray"/>
    <property type="resolution" value="1.85 A"/>
    <property type="chains" value="A/B=1-839"/>
</dbReference>
<dbReference type="PDBsum" id="1F8N"/>
<dbReference type="PDBsum" id="1FGM"/>
<dbReference type="PDBsum" id="1FGO"/>
<dbReference type="PDBsum" id="1FGQ"/>
<dbReference type="PDBsum" id="1FGR"/>
<dbReference type="PDBsum" id="1FGT"/>
<dbReference type="PDBsum" id="1Y4K"/>
<dbReference type="PDBsum" id="1YGE"/>
<dbReference type="PDBsum" id="2SBL"/>
<dbReference type="PDBsum" id="3BNB"/>
<dbReference type="PDBsum" id="3BNC"/>
<dbReference type="PDBsum" id="3BND"/>
<dbReference type="PDBsum" id="3BNE"/>
<dbReference type="PDBsum" id="3PZW"/>
<dbReference type="PDBsum" id="4WFO"/>
<dbReference type="PDBsum" id="4WHA"/>
<dbReference type="PDBsum" id="5EEO"/>
<dbReference type="PDBsum" id="5T5V"/>
<dbReference type="PDBsum" id="5TQN"/>
<dbReference type="PDBsum" id="5TQO"/>
<dbReference type="PDBsum" id="5TQP"/>
<dbReference type="PDBsum" id="5TR0"/>
<dbReference type="PDBsum" id="7SOI"/>
<dbReference type="PDBsum" id="7SOJ"/>
<dbReference type="SMR" id="P08170"/>
<dbReference type="STRING" id="3847.P08170"/>
<dbReference type="BindingDB" id="P08170"/>
<dbReference type="ChEMBL" id="CHEMBL4586"/>
<dbReference type="DrugCentral" id="P08170"/>
<dbReference type="SwissLipids" id="SLP:000001639"/>
<dbReference type="PaxDb" id="3847-GLYMA13G42320.1"/>
<dbReference type="GeneID" id="547923"/>
<dbReference type="KEGG" id="gmx:547923"/>
<dbReference type="eggNOG" id="ENOG502QQSP">
    <property type="taxonomic scope" value="Eukaryota"/>
</dbReference>
<dbReference type="InParanoid" id="P08170"/>
<dbReference type="SABIO-RK" id="P08170"/>
<dbReference type="UniPathway" id="UPA00382"/>
<dbReference type="EvolutionaryTrace" id="P08170"/>
<dbReference type="PRO" id="PR:P08170"/>
<dbReference type="Proteomes" id="UP000008827">
    <property type="component" value="Unplaced"/>
</dbReference>
<dbReference type="GO" id="GO:0005737">
    <property type="term" value="C:cytoplasm"/>
    <property type="evidence" value="ECO:0007669"/>
    <property type="project" value="UniProtKB-SubCell"/>
</dbReference>
<dbReference type="GO" id="GO:0005506">
    <property type="term" value="F:iron ion binding"/>
    <property type="evidence" value="ECO:0000314"/>
    <property type="project" value="UniProtKB"/>
</dbReference>
<dbReference type="GO" id="GO:0016165">
    <property type="term" value="F:linoleate 13S-lipoxygenase activity"/>
    <property type="evidence" value="ECO:0000314"/>
    <property type="project" value="UniProtKB"/>
</dbReference>
<dbReference type="GO" id="GO:0102299">
    <property type="term" value="F:linolenate 9R-lipoxygenase activity"/>
    <property type="evidence" value="ECO:0000314"/>
    <property type="project" value="UniProtKB"/>
</dbReference>
<dbReference type="GO" id="GO:0016702">
    <property type="term" value="F:oxidoreductase activity, acting on single donors with incorporation of molecular oxygen, incorporation of two atoms of oxygen"/>
    <property type="evidence" value="ECO:0000318"/>
    <property type="project" value="GO_Central"/>
</dbReference>
<dbReference type="GO" id="GO:0006633">
    <property type="term" value="P:fatty acid biosynthetic process"/>
    <property type="evidence" value="ECO:0007669"/>
    <property type="project" value="UniProtKB-KW"/>
</dbReference>
<dbReference type="GO" id="GO:0019395">
    <property type="term" value="P:fatty acid oxidation"/>
    <property type="evidence" value="ECO:0000314"/>
    <property type="project" value="UniProtKB"/>
</dbReference>
<dbReference type="GO" id="GO:0034440">
    <property type="term" value="P:lipid oxidation"/>
    <property type="evidence" value="ECO:0000318"/>
    <property type="project" value="GO_Central"/>
</dbReference>
<dbReference type="GO" id="GO:0031408">
    <property type="term" value="P:oxylipin biosynthetic process"/>
    <property type="evidence" value="ECO:0007669"/>
    <property type="project" value="UniProtKB-UniPathway"/>
</dbReference>
<dbReference type="CDD" id="cd01751">
    <property type="entry name" value="PLAT_LH2"/>
    <property type="match status" value="1"/>
</dbReference>
<dbReference type="FunFam" id="1.20.245.10:FF:000002">
    <property type="entry name" value="Lipoxygenase"/>
    <property type="match status" value="1"/>
</dbReference>
<dbReference type="FunFam" id="3.10.450.60:FF:000002">
    <property type="entry name" value="Lipoxygenase"/>
    <property type="match status" value="1"/>
</dbReference>
<dbReference type="FunFam" id="4.10.375.10:FF:000001">
    <property type="entry name" value="Lipoxygenase"/>
    <property type="match status" value="1"/>
</dbReference>
<dbReference type="Gene3D" id="3.10.450.60">
    <property type="match status" value="1"/>
</dbReference>
<dbReference type="Gene3D" id="4.10.375.10">
    <property type="entry name" value="Lipoxygenase-1, Domain 2"/>
    <property type="match status" value="1"/>
</dbReference>
<dbReference type="Gene3D" id="4.10.372.10">
    <property type="entry name" value="Lipoxygenase-1, Domain 3"/>
    <property type="match status" value="1"/>
</dbReference>
<dbReference type="Gene3D" id="1.20.245.10">
    <property type="entry name" value="Lipoxygenase-1, Domain 5"/>
    <property type="match status" value="1"/>
</dbReference>
<dbReference type="Gene3D" id="2.60.60.20">
    <property type="entry name" value="PLAT/LH2 domain"/>
    <property type="match status" value="1"/>
</dbReference>
<dbReference type="InterPro" id="IPR000907">
    <property type="entry name" value="LipOase"/>
</dbReference>
<dbReference type="InterPro" id="IPR013819">
    <property type="entry name" value="LipOase_C"/>
</dbReference>
<dbReference type="InterPro" id="IPR036226">
    <property type="entry name" value="LipOase_C_sf"/>
</dbReference>
<dbReference type="InterPro" id="IPR020834">
    <property type="entry name" value="LipOase_CS"/>
</dbReference>
<dbReference type="InterPro" id="IPR020833">
    <property type="entry name" value="LipOase_Fe_BS"/>
</dbReference>
<dbReference type="InterPro" id="IPR001246">
    <property type="entry name" value="LipOase_plant"/>
</dbReference>
<dbReference type="InterPro" id="IPR042057">
    <property type="entry name" value="Lipoxy_PLAT/LH2"/>
</dbReference>
<dbReference type="InterPro" id="IPR027433">
    <property type="entry name" value="Lipoxygenase_dom_3"/>
</dbReference>
<dbReference type="InterPro" id="IPR001024">
    <property type="entry name" value="PLAT/LH2_dom"/>
</dbReference>
<dbReference type="InterPro" id="IPR036392">
    <property type="entry name" value="PLAT/LH2_dom_sf"/>
</dbReference>
<dbReference type="PANTHER" id="PTHR11771">
    <property type="entry name" value="LIPOXYGENASE"/>
    <property type="match status" value="1"/>
</dbReference>
<dbReference type="Pfam" id="PF00305">
    <property type="entry name" value="Lipoxygenase"/>
    <property type="match status" value="1"/>
</dbReference>
<dbReference type="Pfam" id="PF01477">
    <property type="entry name" value="PLAT"/>
    <property type="match status" value="1"/>
</dbReference>
<dbReference type="PRINTS" id="PR00087">
    <property type="entry name" value="LIPOXYGENASE"/>
</dbReference>
<dbReference type="PRINTS" id="PR00468">
    <property type="entry name" value="PLTLPOXGNASE"/>
</dbReference>
<dbReference type="SMART" id="SM00308">
    <property type="entry name" value="LH2"/>
    <property type="match status" value="1"/>
</dbReference>
<dbReference type="SUPFAM" id="SSF49723">
    <property type="entry name" value="Lipase/lipooxygenase domain (PLAT/LH2 domain)"/>
    <property type="match status" value="1"/>
</dbReference>
<dbReference type="SUPFAM" id="SSF48484">
    <property type="entry name" value="Lipoxigenase"/>
    <property type="match status" value="1"/>
</dbReference>
<dbReference type="PROSITE" id="PS00711">
    <property type="entry name" value="LIPOXYGENASE_1"/>
    <property type="match status" value="1"/>
</dbReference>
<dbReference type="PROSITE" id="PS00081">
    <property type="entry name" value="LIPOXYGENASE_2"/>
    <property type="match status" value="1"/>
</dbReference>
<dbReference type="PROSITE" id="PS51393">
    <property type="entry name" value="LIPOXYGENASE_3"/>
    <property type="match status" value="1"/>
</dbReference>
<dbReference type="PROSITE" id="PS50095">
    <property type="entry name" value="PLAT"/>
    <property type="match status" value="1"/>
</dbReference>
<accession>P08170</accession>
<comment type="function">
    <text evidence="5">Plant lipoxygenase may be involved in a number of diverse aspects of plant physiology including growth and development, pest resistance, and senescence or responses to wounding. With linoleate as substrate, L-1 shows a preference for carbon 13 as the site for hydroperoxidation (in contrast to L-2 and L-3, which utilize either carbon 9 or 13). At pH above 8.5, only (9Z,11E,13S)-13-hydroperoxyoctadeca-9,11-dienoate is produced, but as the pH decreases, the proportion of (9S)-hydroperoxide increases linearly until at pH 6.0 it represents about 25 % of the products.</text>
</comment>
<comment type="catalytic activity">
    <reaction evidence="5 10">
        <text>(9Z,12Z)-octadecadienoate + O2 = (13S)-hydroperoxy-(9Z,11E)-octadecadienoate</text>
        <dbReference type="Rhea" id="RHEA:22780"/>
        <dbReference type="ChEBI" id="CHEBI:15379"/>
        <dbReference type="ChEBI" id="CHEBI:30245"/>
        <dbReference type="ChEBI" id="CHEBI:57466"/>
        <dbReference type="EC" id="1.13.11.12"/>
    </reaction>
</comment>
<comment type="catalytic activity">
    <reaction evidence="5 10">
        <text>(9Z,12Z,15Z)-octadecatrienoate + O2 = (13S)-hydroperoxy-(9Z,11E,15Z)-octadecatrienoate</text>
        <dbReference type="Rhea" id="RHEA:34495"/>
        <dbReference type="ChEBI" id="CHEBI:15379"/>
        <dbReference type="ChEBI" id="CHEBI:32387"/>
        <dbReference type="ChEBI" id="CHEBI:58757"/>
        <dbReference type="EC" id="1.13.11.12"/>
    </reaction>
</comment>
<comment type="catalytic activity">
    <reaction evidence="8">
        <text>(4Z,7Z,10Z,13Z,16Z,19Z)-docosahexaenoate + O2 = (17S)-hydroperoxy-(4Z,7Z,10Z,13Z,15E,19Z)-docosahexaenoate</text>
        <dbReference type="Rhea" id="RHEA:50840"/>
        <dbReference type="ChEBI" id="CHEBI:15379"/>
        <dbReference type="ChEBI" id="CHEBI:77016"/>
        <dbReference type="ChEBI" id="CHEBI:133795"/>
    </reaction>
    <physiologicalReaction direction="left-to-right" evidence="8">
        <dbReference type="Rhea" id="RHEA:50841"/>
    </physiologicalReaction>
</comment>
<comment type="catalytic activity">
    <reaction evidence="8">
        <text>(4Z,7Z,10Z,13Z,16Z)-docosapentaenoate + O2 = (17S)-hydroperoxy-(4Z,7Z,10Z,13Z,15E)-docosapentaenoate</text>
        <dbReference type="Rhea" id="RHEA:50828"/>
        <dbReference type="ChEBI" id="CHEBI:15379"/>
        <dbReference type="ChEBI" id="CHEBI:77226"/>
        <dbReference type="ChEBI" id="CHEBI:133796"/>
    </reaction>
    <physiologicalReaction direction="left-to-right" evidence="8">
        <dbReference type="Rhea" id="RHEA:50829"/>
    </physiologicalReaction>
</comment>
<comment type="catalytic activity">
    <reaction evidence="8">
        <text>(7Z,10Z,13Z,16Z,19Z)-docosapentaenoate + O2 = 17-hydroperoxy-(7Z,10Z,13Z,15E,19Z)-docosapentaenoate</text>
        <dbReference type="Rhea" id="RHEA:50832"/>
        <dbReference type="ChEBI" id="CHEBI:15379"/>
        <dbReference type="ChEBI" id="CHEBI:77224"/>
        <dbReference type="ChEBI" id="CHEBI:133797"/>
    </reaction>
    <physiologicalReaction direction="left-to-right" evidence="8">
        <dbReference type="Rhea" id="RHEA:50833"/>
    </physiologicalReaction>
</comment>
<comment type="cofactor">
    <cofactor evidence="2 12">
        <name>Fe cation</name>
        <dbReference type="ChEBI" id="CHEBI:24875"/>
    </cofactor>
    <text evidence="2 12">Binds 1 Fe cation per subunit. Iron is tightly bound.</text>
</comment>
<comment type="biophysicochemical properties">
    <phDependence>
        <text evidence="10">Inactive below pH 6.0.</text>
    </phDependence>
</comment>
<comment type="pathway">
    <text evidence="2">Lipid metabolism; oxylipin biosynthesis.</text>
</comment>
<comment type="subunit">
    <text evidence="4 11 13">Monomer.</text>
</comment>
<comment type="subcellular location">
    <subcellularLocation>
        <location>Cytoplasm</location>
    </subcellularLocation>
</comment>
<comment type="induction">
    <text>The hydroperoxide product serves to activate the resting enzyme. The activation is accompanied by the oxidation of Fe(2+)entadiene structure. L-1 prefers anionic substrate.</text>
</comment>
<comment type="miscellaneous">
    <text>Soybean contains at least 4 distinct isoenzymes, L-1, L-2, L-3a and L-3b in dry seeds, and at least two distinct isozymes in the hypocotyl/radicle region of the seedling stem.</text>
</comment>
<comment type="similarity">
    <text evidence="14">Belongs to the lipoxygenase family.</text>
</comment>
<comment type="sequence caution" evidence="14">
    <conflict type="frameshift">
        <sequence resource="EMBL-CDS" id="CAA47717"/>
    </conflict>
</comment>
<name>LOX1_SOYBN</name>
<proteinExistence type="evidence at protein level"/>
<protein>
    <recommendedName>
        <fullName>Seed linoleate 13S-lipoxygenase-1</fullName>
        <ecNumber evidence="5 10">1.13.11.12</ecNumber>
    </recommendedName>
    <alternativeName>
        <fullName>Lipoxygenase-1</fullName>
        <shortName>L-1</shortName>
    </alternativeName>
</protein>
<keyword id="KW-0002">3D-structure</keyword>
<keyword id="KW-0963">Cytoplasm</keyword>
<keyword id="KW-0223">Dioxygenase</keyword>
<keyword id="KW-0903">Direct protein sequencing</keyword>
<keyword id="KW-0275">Fatty acid biosynthesis</keyword>
<keyword id="KW-0276">Fatty acid metabolism</keyword>
<keyword id="KW-0408">Iron</keyword>
<keyword id="KW-0444">Lipid biosynthesis</keyword>
<keyword id="KW-0443">Lipid metabolism</keyword>
<keyword id="KW-0479">Metal-binding</keyword>
<keyword id="KW-0560">Oxidoreductase</keyword>
<keyword id="KW-0925">Oxylipin biosynthesis</keyword>
<keyword id="KW-1185">Reference proteome</keyword>
<organism>
    <name type="scientific">Glycine max</name>
    <name type="common">Soybean</name>
    <name type="synonym">Glycine hispida</name>
    <dbReference type="NCBI Taxonomy" id="3847"/>
    <lineage>
        <taxon>Eukaryota</taxon>
        <taxon>Viridiplantae</taxon>
        <taxon>Streptophyta</taxon>
        <taxon>Embryophyta</taxon>
        <taxon>Tracheophyta</taxon>
        <taxon>Spermatophyta</taxon>
        <taxon>Magnoliopsida</taxon>
        <taxon>eudicotyledons</taxon>
        <taxon>Gunneridae</taxon>
        <taxon>Pentapetalae</taxon>
        <taxon>rosids</taxon>
        <taxon>fabids</taxon>
        <taxon>Fabales</taxon>
        <taxon>Fabaceae</taxon>
        <taxon>Papilionoideae</taxon>
        <taxon>50 kb inversion clade</taxon>
        <taxon>NPAAA clade</taxon>
        <taxon>indigoferoid/millettioid clade</taxon>
        <taxon>Phaseoleae</taxon>
        <taxon>Glycine</taxon>
        <taxon>Glycine subgen. Soja</taxon>
    </lineage>
</organism>